<proteinExistence type="inferred from homology"/>
<accession>A1KKJ0</accession>
<keyword id="KW-0131">Cell cycle</keyword>
<keyword id="KW-0132">Cell division</keyword>
<keyword id="KW-0963">Cytoplasm</keyword>
<keyword id="KW-0717">Septation</keyword>
<sequence length="218" mass="25028">MSTLHKVKAYFGMAPMEDYDDEYYDDRAPSRGYARPRFDDDYGRYDGRDYDDARSDSRGDLRGEPADYPPPGYRGGYADEPRFRPREFDRAEMTRPRFGSWLRNSTRGALAMDPRRMAMMFEDGHPLSKITTLRPKDYSEARTIGERFRDGSPVIMDLVSMDNADAKRLVDFAAGLAFALRGSFDKVATKVFLLSPADVDVSPEERRRIAETGFYAYQ</sequence>
<comment type="function">
    <text evidence="1">Cell division protein that is part of the divisome complex and is recruited early to the Z-ring. Probably stimulates Z-ring formation, perhaps through the cross-linking of FtsZ protofilaments. Its function overlaps with FtsA.</text>
</comment>
<comment type="subunit">
    <text evidence="1">Homodimer. Interacts with FtsZ.</text>
</comment>
<comment type="subcellular location">
    <subcellularLocation>
        <location evidence="1">Cytoplasm</location>
    </subcellularLocation>
    <text evidence="1">Localizes to the division site, in a FtsZ-dependent manner.</text>
</comment>
<comment type="similarity">
    <text evidence="1">Belongs to the SepF family.</text>
</comment>
<comment type="sequence caution" evidence="3">
    <conflict type="erroneous initiation">
        <sequence resource="EMBL-CDS" id="CAL72152"/>
    </conflict>
</comment>
<dbReference type="EMBL" id="AM408590">
    <property type="protein sequence ID" value="CAL72152.1"/>
    <property type="status" value="ALT_INIT"/>
    <property type="molecule type" value="Genomic_DNA"/>
</dbReference>
<dbReference type="RefSeq" id="WP_003411133.1">
    <property type="nucleotide sequence ID" value="NC_008769.1"/>
</dbReference>
<dbReference type="SMR" id="A1KKJ0"/>
<dbReference type="GeneID" id="45426125"/>
<dbReference type="KEGG" id="mbb:BCG_2164c"/>
<dbReference type="HOGENOM" id="CLU_078499_0_0_11"/>
<dbReference type="Proteomes" id="UP000001472">
    <property type="component" value="Chromosome"/>
</dbReference>
<dbReference type="GO" id="GO:0005737">
    <property type="term" value="C:cytoplasm"/>
    <property type="evidence" value="ECO:0007669"/>
    <property type="project" value="UniProtKB-SubCell"/>
</dbReference>
<dbReference type="GO" id="GO:0000917">
    <property type="term" value="P:division septum assembly"/>
    <property type="evidence" value="ECO:0007669"/>
    <property type="project" value="UniProtKB-KW"/>
</dbReference>
<dbReference type="GO" id="GO:0043093">
    <property type="term" value="P:FtsZ-dependent cytokinesis"/>
    <property type="evidence" value="ECO:0007669"/>
    <property type="project" value="UniProtKB-UniRule"/>
</dbReference>
<dbReference type="FunFam" id="3.30.110.150:FF:000001">
    <property type="entry name" value="Cell division protein SepF"/>
    <property type="match status" value="1"/>
</dbReference>
<dbReference type="Gene3D" id="3.30.110.150">
    <property type="entry name" value="SepF-like protein"/>
    <property type="match status" value="1"/>
</dbReference>
<dbReference type="HAMAP" id="MF_01197">
    <property type="entry name" value="SepF"/>
    <property type="match status" value="1"/>
</dbReference>
<dbReference type="InterPro" id="IPR023052">
    <property type="entry name" value="Cell_div_SepF"/>
</dbReference>
<dbReference type="InterPro" id="IPR007561">
    <property type="entry name" value="Cell_div_SepF/SepF-rel"/>
</dbReference>
<dbReference type="InterPro" id="IPR038594">
    <property type="entry name" value="SepF-like_sf"/>
</dbReference>
<dbReference type="PANTHER" id="PTHR35798">
    <property type="entry name" value="CELL DIVISION PROTEIN SEPF"/>
    <property type="match status" value="1"/>
</dbReference>
<dbReference type="PANTHER" id="PTHR35798:SF1">
    <property type="entry name" value="CELL DIVISION PROTEIN SEPF"/>
    <property type="match status" value="1"/>
</dbReference>
<dbReference type="Pfam" id="PF04472">
    <property type="entry name" value="SepF"/>
    <property type="match status" value="1"/>
</dbReference>
<feature type="chain" id="PRO_0000334039" description="Cell division protein SepF">
    <location>
        <begin position="1"/>
        <end position="218"/>
    </location>
</feature>
<feature type="region of interest" description="Disordered" evidence="2">
    <location>
        <begin position="20"/>
        <end position="81"/>
    </location>
</feature>
<feature type="compositionally biased region" description="Basic and acidic residues" evidence="2">
    <location>
        <begin position="36"/>
        <end position="65"/>
    </location>
</feature>
<protein>
    <recommendedName>
        <fullName evidence="1">Cell division protein SepF</fullName>
    </recommendedName>
</protein>
<organism>
    <name type="scientific">Mycobacterium bovis (strain BCG / Pasteur 1173P2)</name>
    <dbReference type="NCBI Taxonomy" id="410289"/>
    <lineage>
        <taxon>Bacteria</taxon>
        <taxon>Bacillati</taxon>
        <taxon>Actinomycetota</taxon>
        <taxon>Actinomycetes</taxon>
        <taxon>Mycobacteriales</taxon>
        <taxon>Mycobacteriaceae</taxon>
        <taxon>Mycobacterium</taxon>
        <taxon>Mycobacterium tuberculosis complex</taxon>
    </lineage>
</organism>
<reference key="1">
    <citation type="journal article" date="2007" name="Proc. Natl. Acad. Sci. U.S.A.">
        <title>Genome plasticity of BCG and impact on vaccine efficacy.</title>
        <authorList>
            <person name="Brosch R."/>
            <person name="Gordon S.V."/>
            <person name="Garnier T."/>
            <person name="Eiglmeier K."/>
            <person name="Frigui W."/>
            <person name="Valenti P."/>
            <person name="Dos Santos S."/>
            <person name="Duthoy S."/>
            <person name="Lacroix C."/>
            <person name="Garcia-Pelayo C."/>
            <person name="Inwald J.K."/>
            <person name="Golby P."/>
            <person name="Garcia J.N."/>
            <person name="Hewinson R.G."/>
            <person name="Behr M.A."/>
            <person name="Quail M.A."/>
            <person name="Churcher C."/>
            <person name="Barrell B.G."/>
            <person name="Parkhill J."/>
            <person name="Cole S.T."/>
        </authorList>
    </citation>
    <scope>NUCLEOTIDE SEQUENCE [LARGE SCALE GENOMIC DNA]</scope>
    <source>
        <strain>BCG / Pasteur 1173P2</strain>
    </source>
</reference>
<name>SEPF_MYCBP</name>
<gene>
    <name evidence="1" type="primary">sepF</name>
    <name type="ordered locus">BCG_2164c</name>
</gene>
<evidence type="ECO:0000255" key="1">
    <source>
        <dbReference type="HAMAP-Rule" id="MF_01197"/>
    </source>
</evidence>
<evidence type="ECO:0000256" key="2">
    <source>
        <dbReference type="SAM" id="MobiDB-lite"/>
    </source>
</evidence>
<evidence type="ECO:0000305" key="3"/>